<reference key="1">
    <citation type="journal article" date="1991" name="J. Bacteriol.">
        <title>Analysis of virC, an operon involved in the secretion of Yop proteins by Yersinia enterocolitica.</title>
        <authorList>
            <person name="Michiels T."/>
            <person name="Vanooteghem J.-C."/>
            <person name="de Rouvroit C."/>
            <person name="China B."/>
            <person name="Gustin A."/>
            <person name="Boudry P."/>
            <person name="Cornelis G.R."/>
        </authorList>
    </citation>
    <scope>NUCLEOTIDE SEQUENCE [GENOMIC DNA]</scope>
    <source>
        <strain>439-80 / Serotype O:9</strain>
        <plasmid>pYV</plasmid>
    </source>
</reference>
<reference key="2">
    <citation type="submission" date="1998-10" db="EMBL/GenBank/DDBJ databases">
        <title>Detailed genetic map of the pYVe227 plasmid of Yersinia enterocolitica serotype O:9.</title>
        <authorList>
            <person name="Iriarte M."/>
            <person name="Lambermont I."/>
            <person name="Kerbourch C."/>
            <person name="Cornelis G.R."/>
        </authorList>
    </citation>
    <scope>NUCLEOTIDE SEQUENCE [GENOMIC DNA]</scope>
    <source>
        <strain>W22703 / Serotype O:9 / Biotype 2</strain>
        <plasmid>pYVe227</plasmid>
    </source>
</reference>
<reference key="3">
    <citation type="journal article" date="2003" name="Res. Microbiol.">
        <title>DNA sequence and analysis of the pYVa127/90 virulence plasmid of Yersinia enterocolitica strain A127/90.</title>
        <authorList>
            <person name="Foultier B."/>
            <person name="Cornelis G.R."/>
        </authorList>
    </citation>
    <scope>NUCLEOTIDE SEQUENCE [GENOMIC DNA]</scope>
    <source>
        <strain>A127/90 / Serotype O:8 / Biotype 1B</strain>
        <plasmid>pYVa127/90</plasmid>
    </source>
</reference>
<reference key="4">
    <citation type="journal article" date="2001" name="J. Bacteriol.">
        <title>Regulated secretion of YopN by the type III machinery of Yersinia enterocolitica.</title>
        <authorList>
            <person name="Cheng L.W."/>
            <person name="Kay O."/>
            <person name="Schneewind O."/>
        </authorList>
    </citation>
    <scope>FUNCTION</scope>
    <scope>SUBUNIT</scope>
    <source>
        <strain>W22703 / Serotype O:9 / Biotype 2</strain>
    </source>
</reference>
<keyword id="KW-0997">Cell inner membrane</keyword>
<keyword id="KW-1003">Cell membrane</keyword>
<keyword id="KW-0143">Chaperone</keyword>
<keyword id="KW-0963">Cytoplasm</keyword>
<keyword id="KW-0472">Membrane</keyword>
<keyword id="KW-0614">Plasmid</keyword>
<gene>
    <name type="primary">yscB</name>
</gene>
<organism>
    <name type="scientific">Yersinia enterocolitica</name>
    <dbReference type="NCBI Taxonomy" id="630"/>
    <lineage>
        <taxon>Bacteria</taxon>
        <taxon>Pseudomonadati</taxon>
        <taxon>Pseudomonadota</taxon>
        <taxon>Gammaproteobacteria</taxon>
        <taxon>Enterobacterales</taxon>
        <taxon>Yersiniaceae</taxon>
        <taxon>Yersinia</taxon>
    </lineage>
</organism>
<proteinExistence type="evidence at protein level"/>
<sequence length="137" mass="15469">MQNLLKNLATSLGRKPFVADKQGVYRLTIDKHLVMLTPHGSELVLRTPIDAPMLREGNNVNVTLLRSLMQQALAWAKRYPQTLVLDDCGQLVLEARLRLQELDTHGLQEVINKQLALLEHLIPQLTPFSVASRVGWN</sequence>
<protein>
    <recommendedName>
        <fullName>Chaperone protein YscB</fullName>
    </recommendedName>
    <alternativeName>
        <fullName>Yop proteins translocation protein B</fullName>
    </alternativeName>
</protein>
<dbReference type="EMBL" id="M74011">
    <property type="protein sequence ID" value="AAC37019.1"/>
    <property type="molecule type" value="Genomic_DNA"/>
</dbReference>
<dbReference type="EMBL" id="AF102990">
    <property type="protein sequence ID" value="AAD16835.1"/>
    <property type="molecule type" value="Genomic_DNA"/>
</dbReference>
<dbReference type="EMBL" id="AY150843">
    <property type="protein sequence ID" value="AAN37552.1"/>
    <property type="molecule type" value="Genomic_DNA"/>
</dbReference>
<dbReference type="PIR" id="B40361">
    <property type="entry name" value="B40361"/>
</dbReference>
<dbReference type="RefSeq" id="NP_052412.1">
    <property type="nucleotide sequence ID" value="NC_002120.1"/>
</dbReference>
<dbReference type="RefSeq" id="NP_783686.1">
    <property type="nucleotide sequence ID" value="NC_004564.1"/>
</dbReference>
<dbReference type="RefSeq" id="NP_863534.1">
    <property type="nucleotide sequence ID" value="NC_005017.1"/>
</dbReference>
<dbReference type="RefSeq" id="WP_005176453.1">
    <property type="nucleotide sequence ID" value="NZ_NWMR01000033.1"/>
</dbReference>
<dbReference type="RefSeq" id="WP_010891224.1">
    <property type="nucleotide sequence ID" value="NZ_KN150737.1"/>
</dbReference>
<dbReference type="SMR" id="P0C2M8"/>
<dbReference type="GeneID" id="31412287"/>
<dbReference type="KEGG" id="yet:CH48_4201"/>
<dbReference type="PATRIC" id="fig|630.129.peg.4373"/>
<dbReference type="OMA" id="SYHLRID"/>
<dbReference type="GO" id="GO:0005737">
    <property type="term" value="C:cytoplasm"/>
    <property type="evidence" value="ECO:0007669"/>
    <property type="project" value="UniProtKB-SubCell"/>
</dbReference>
<dbReference type="GO" id="GO:0005886">
    <property type="term" value="C:plasma membrane"/>
    <property type="evidence" value="ECO:0007669"/>
    <property type="project" value="UniProtKB-SubCell"/>
</dbReference>
<dbReference type="GO" id="GO:0030254">
    <property type="term" value="P:protein secretion by the type III secretion system"/>
    <property type="evidence" value="ECO:0007669"/>
    <property type="project" value="InterPro"/>
</dbReference>
<dbReference type="CDD" id="cd17027">
    <property type="entry name" value="T3SC_IA_YscB_AscB-like"/>
    <property type="match status" value="1"/>
</dbReference>
<dbReference type="Gene3D" id="3.30.1460.10">
    <property type="match status" value="1"/>
</dbReference>
<dbReference type="InterPro" id="IPR013353">
    <property type="entry name" value="T3SS_YscB"/>
</dbReference>
<dbReference type="InterPro" id="IPR010261">
    <property type="entry name" value="Tir_chaperone"/>
</dbReference>
<dbReference type="NCBIfam" id="TIGR02513">
    <property type="entry name" value="type_III_yscB"/>
    <property type="match status" value="1"/>
</dbReference>
<dbReference type="Pfam" id="PF05932">
    <property type="entry name" value="CesT"/>
    <property type="match status" value="1"/>
</dbReference>
<dbReference type="SUPFAM" id="SSF69635">
    <property type="entry name" value="Type III secretory system chaperone-like"/>
    <property type="match status" value="1"/>
</dbReference>
<geneLocation type="plasmid">
    <name>pYV</name>
</geneLocation>
<geneLocation type="plasmid">
    <name>pYVe227</name>
</geneLocation>
<geneLocation type="plasmid">
    <name>pYVa127/90</name>
</geneLocation>
<evidence type="ECO:0000250" key="1"/>
<evidence type="ECO:0000269" key="2">
    <source>
    </source>
</evidence>
<feature type="chain" id="PRO_0000066477" description="Chaperone protein YscB">
    <location>
        <begin position="1"/>
        <end position="137"/>
    </location>
</feature>
<feature type="sequence variant" description="In plasmid pYVa127/90.">
    <original>K</original>
    <variation>E</variation>
    <location>
        <position position="15"/>
    </location>
</feature>
<feature type="sequence variant" description="In plasmid pYVa127/90.">
    <original>T</original>
    <variation>A</variation>
    <location>
        <position position="37"/>
    </location>
</feature>
<feature type="sequence variant" description="In plasmid pYVa127/90.">
    <original>H</original>
    <variation>Y</variation>
    <location>
        <position position="120"/>
    </location>
</feature>
<name>YSCB_YEREN</name>
<comment type="function">
    <text evidence="2">Functions as a specific chaperone for YopN. It could facilitate the secretion and the subsequent translocation of YopN.</text>
</comment>
<comment type="subunit">
    <text evidence="2">Interacts with SycN to form a complex which specifically binds to YopN.</text>
</comment>
<comment type="subcellular location">
    <subcellularLocation>
        <location evidence="1">Cytoplasm</location>
    </subcellularLocation>
    <subcellularLocation>
        <location evidence="1">Cell inner membrane</location>
        <topology evidence="1">Peripheral membrane protein</topology>
    </subcellularLocation>
    <text evidence="1">Not exported across the inner membrane.</text>
</comment>
<comment type="induction">
    <text>At 37 degrees Celsius in the absence of calcium.</text>
</comment>
<accession>P0C2M8</accession>
<accession>Q01243</accession>
<accession>Q93KT2</accession>